<reference key="1">
    <citation type="journal article" date="1999" name="Mol. Microbiol.">
        <title>Two evolutionarily closely related ABC transporters mediate the uptake of choline for synthesis of the osmoprotectant glycine betaine in Bacillus subtilis.</title>
        <authorList>
            <person name="Kappes R.M."/>
            <person name="Kempf B."/>
            <person name="Kneip S."/>
            <person name="Boch J."/>
            <person name="Gade J."/>
            <person name="Meier-Wagner J."/>
            <person name="Bremer E."/>
        </authorList>
    </citation>
    <scope>NUCLEOTIDE SEQUENCE [GENOMIC DNA]</scope>
    <scope>FUNCTION</scope>
    <scope>SUBUNIT</scope>
    <source>
        <strain>168 / JH642</strain>
    </source>
</reference>
<reference key="2">
    <citation type="journal article" date="1997" name="Nature">
        <title>The complete genome sequence of the Gram-positive bacterium Bacillus subtilis.</title>
        <authorList>
            <person name="Kunst F."/>
            <person name="Ogasawara N."/>
            <person name="Moszer I."/>
            <person name="Albertini A.M."/>
            <person name="Alloni G."/>
            <person name="Azevedo V."/>
            <person name="Bertero M.G."/>
            <person name="Bessieres P."/>
            <person name="Bolotin A."/>
            <person name="Borchert S."/>
            <person name="Borriss R."/>
            <person name="Boursier L."/>
            <person name="Brans A."/>
            <person name="Braun M."/>
            <person name="Brignell S.C."/>
            <person name="Bron S."/>
            <person name="Brouillet S."/>
            <person name="Bruschi C.V."/>
            <person name="Caldwell B."/>
            <person name="Capuano V."/>
            <person name="Carter N.M."/>
            <person name="Choi S.-K."/>
            <person name="Codani J.-J."/>
            <person name="Connerton I.F."/>
            <person name="Cummings N.J."/>
            <person name="Daniel R.A."/>
            <person name="Denizot F."/>
            <person name="Devine K.M."/>
            <person name="Duesterhoeft A."/>
            <person name="Ehrlich S.D."/>
            <person name="Emmerson P.T."/>
            <person name="Entian K.-D."/>
            <person name="Errington J."/>
            <person name="Fabret C."/>
            <person name="Ferrari E."/>
            <person name="Foulger D."/>
            <person name="Fritz C."/>
            <person name="Fujita M."/>
            <person name="Fujita Y."/>
            <person name="Fuma S."/>
            <person name="Galizzi A."/>
            <person name="Galleron N."/>
            <person name="Ghim S.-Y."/>
            <person name="Glaser P."/>
            <person name="Goffeau A."/>
            <person name="Golightly E.J."/>
            <person name="Grandi G."/>
            <person name="Guiseppi G."/>
            <person name="Guy B.J."/>
            <person name="Haga K."/>
            <person name="Haiech J."/>
            <person name="Harwood C.R."/>
            <person name="Henaut A."/>
            <person name="Hilbert H."/>
            <person name="Holsappel S."/>
            <person name="Hosono S."/>
            <person name="Hullo M.-F."/>
            <person name="Itaya M."/>
            <person name="Jones L.-M."/>
            <person name="Joris B."/>
            <person name="Karamata D."/>
            <person name="Kasahara Y."/>
            <person name="Klaerr-Blanchard M."/>
            <person name="Klein C."/>
            <person name="Kobayashi Y."/>
            <person name="Koetter P."/>
            <person name="Koningstein G."/>
            <person name="Krogh S."/>
            <person name="Kumano M."/>
            <person name="Kurita K."/>
            <person name="Lapidus A."/>
            <person name="Lardinois S."/>
            <person name="Lauber J."/>
            <person name="Lazarevic V."/>
            <person name="Lee S.-M."/>
            <person name="Levine A."/>
            <person name="Liu H."/>
            <person name="Masuda S."/>
            <person name="Mauel C."/>
            <person name="Medigue C."/>
            <person name="Medina N."/>
            <person name="Mellado R.P."/>
            <person name="Mizuno M."/>
            <person name="Moestl D."/>
            <person name="Nakai S."/>
            <person name="Noback M."/>
            <person name="Noone D."/>
            <person name="O'Reilly M."/>
            <person name="Ogawa K."/>
            <person name="Ogiwara A."/>
            <person name="Oudega B."/>
            <person name="Park S.-H."/>
            <person name="Parro V."/>
            <person name="Pohl T.M."/>
            <person name="Portetelle D."/>
            <person name="Porwollik S."/>
            <person name="Prescott A.M."/>
            <person name="Presecan E."/>
            <person name="Pujic P."/>
            <person name="Purnelle B."/>
            <person name="Rapoport G."/>
            <person name="Rey M."/>
            <person name="Reynolds S."/>
            <person name="Rieger M."/>
            <person name="Rivolta C."/>
            <person name="Rocha E."/>
            <person name="Roche B."/>
            <person name="Rose M."/>
            <person name="Sadaie Y."/>
            <person name="Sato T."/>
            <person name="Scanlan E."/>
            <person name="Schleich S."/>
            <person name="Schroeter R."/>
            <person name="Scoffone F."/>
            <person name="Sekiguchi J."/>
            <person name="Sekowska A."/>
            <person name="Seror S.J."/>
            <person name="Serror P."/>
            <person name="Shin B.-S."/>
            <person name="Soldo B."/>
            <person name="Sorokin A."/>
            <person name="Tacconi E."/>
            <person name="Takagi T."/>
            <person name="Takahashi H."/>
            <person name="Takemaru K."/>
            <person name="Takeuchi M."/>
            <person name="Tamakoshi A."/>
            <person name="Tanaka T."/>
            <person name="Terpstra P."/>
            <person name="Tognoni A."/>
            <person name="Tosato V."/>
            <person name="Uchiyama S."/>
            <person name="Vandenbol M."/>
            <person name="Vannier F."/>
            <person name="Vassarotti A."/>
            <person name="Viari A."/>
            <person name="Wambutt R."/>
            <person name="Wedler E."/>
            <person name="Wedler H."/>
            <person name="Weitzenegger T."/>
            <person name="Winters P."/>
            <person name="Wipat A."/>
            <person name="Yamamoto H."/>
            <person name="Yamane K."/>
            <person name="Yasumoto K."/>
            <person name="Yata K."/>
            <person name="Yoshida K."/>
            <person name="Yoshikawa H.-F."/>
            <person name="Zumstein E."/>
            <person name="Yoshikawa H."/>
            <person name="Danchin A."/>
        </authorList>
    </citation>
    <scope>NUCLEOTIDE SEQUENCE [LARGE SCALE GENOMIC DNA]</scope>
    <source>
        <strain>168</strain>
    </source>
</reference>
<reference key="3">
    <citation type="journal article" date="1996" name="J. Bacteriol.">
        <title>Three transport systems for the osmoprotectant glycine betaine operate in Bacillus subtilis: characterization of OpuD.</title>
        <authorList>
            <person name="Kappes R."/>
            <person name="Kempf B."/>
            <person name="Bremer E."/>
        </authorList>
    </citation>
    <scope>FUNCTION IN GLYCINE BETAINE TRANSPORT</scope>
    <source>
        <strain>168 / JH642</strain>
    </source>
</reference>
<reference key="4">
    <citation type="journal article" date="2013" name="Microbiology">
        <title>Involvement of OpcR, a GbsR-type transcriptional regulator, in negative regulation of two evolutionarily closely related choline uptake genes in Bacillus subtilis.</title>
        <authorList>
            <person name="Lee C.H."/>
            <person name="Wu T.Y."/>
            <person name="Shaw G.C."/>
        </authorList>
    </citation>
    <scope>INDUCTION</scope>
    <source>
        <strain>168</strain>
    </source>
</reference>
<feature type="chain" id="PRO_0000060157" description="Glycine betaine/carnitine/choline transport system permease protein OpuCD">
    <location>
        <begin position="1"/>
        <end position="229"/>
    </location>
</feature>
<feature type="transmembrane region" description="Helical" evidence="1">
    <location>
        <begin position="27"/>
        <end position="47"/>
    </location>
</feature>
<feature type="transmembrane region" description="Helical" evidence="1">
    <location>
        <begin position="55"/>
        <end position="74"/>
    </location>
</feature>
<feature type="transmembrane region" description="Helical" evidence="1">
    <location>
        <begin position="78"/>
        <end position="100"/>
    </location>
</feature>
<feature type="transmembrane region" description="Helical" evidence="1">
    <location>
        <begin position="148"/>
        <end position="168"/>
    </location>
</feature>
<feature type="transmembrane region" description="Helical" evidence="1">
    <location>
        <begin position="182"/>
        <end position="202"/>
    </location>
</feature>
<feature type="domain" description="ABC transmembrane type-1" evidence="1">
    <location>
        <begin position="22"/>
        <end position="202"/>
    </location>
</feature>
<comment type="function">
    <text evidence="2 4">Involved in a high affinity multicomponent binding-protein-dependent transport system for glycine betaine, carnitine and choline; probably responsible for the translocation of the substrate across the membrane.</text>
</comment>
<comment type="subunit">
    <text evidence="2">The complex is composed of two ATP-binding proteins (OpuCA), two transmembrane proteins (OpuCB and OpuCD) and a solute-binding protein (OpuCC).</text>
</comment>
<comment type="subcellular location">
    <subcellularLocation>
        <location>Cell membrane</location>
        <topology>Multi-pass membrane protein</topology>
    </subcellularLocation>
</comment>
<comment type="induction">
    <text evidence="3">Repressed by OpcR.</text>
</comment>
<comment type="similarity">
    <text evidence="5">Belongs to the binding-protein-dependent transport system permease family. CysTW subfamily.</text>
</comment>
<evidence type="ECO:0000255" key="1">
    <source>
        <dbReference type="PROSITE-ProRule" id="PRU00441"/>
    </source>
</evidence>
<evidence type="ECO:0000269" key="2">
    <source>
    </source>
</evidence>
<evidence type="ECO:0000269" key="3">
    <source>
    </source>
</evidence>
<evidence type="ECO:0000269" key="4">
    <source>
    </source>
</evidence>
<evidence type="ECO:0000305" key="5"/>
<dbReference type="EMBL" id="AF009352">
    <property type="protein sequence ID" value="AAB63771.1"/>
    <property type="molecule type" value="Genomic_DNA"/>
</dbReference>
<dbReference type="EMBL" id="AL009126">
    <property type="protein sequence ID" value="CAB15385.1"/>
    <property type="molecule type" value="Genomic_DNA"/>
</dbReference>
<dbReference type="PIR" id="F69670">
    <property type="entry name" value="F69670"/>
</dbReference>
<dbReference type="RefSeq" id="NP_391260.1">
    <property type="nucleotide sequence ID" value="NC_000964.3"/>
</dbReference>
<dbReference type="RefSeq" id="WP_003244403.1">
    <property type="nucleotide sequence ID" value="NZ_OZ025638.1"/>
</dbReference>
<dbReference type="SMR" id="O34742"/>
<dbReference type="FunCoup" id="O34742">
    <property type="interactions" value="151"/>
</dbReference>
<dbReference type="STRING" id="224308.BSU33800"/>
<dbReference type="TCDB" id="3.A.1.12.4">
    <property type="family name" value="the atp-binding cassette (abc) superfamily"/>
</dbReference>
<dbReference type="PaxDb" id="224308-BSU33800"/>
<dbReference type="EnsemblBacteria" id="CAB15385">
    <property type="protein sequence ID" value="CAB15385"/>
    <property type="gene ID" value="BSU_33800"/>
</dbReference>
<dbReference type="GeneID" id="937199"/>
<dbReference type="KEGG" id="bsu:BSU33800"/>
<dbReference type="PATRIC" id="fig|224308.179.peg.3665"/>
<dbReference type="eggNOG" id="COG1174">
    <property type="taxonomic scope" value="Bacteria"/>
</dbReference>
<dbReference type="InParanoid" id="O34742"/>
<dbReference type="OrthoDB" id="9801163at2"/>
<dbReference type="PhylomeDB" id="O34742"/>
<dbReference type="BioCyc" id="BSUB:BSU33800-MONOMER"/>
<dbReference type="Proteomes" id="UP000001570">
    <property type="component" value="Chromosome"/>
</dbReference>
<dbReference type="GO" id="GO:0005886">
    <property type="term" value="C:plasma membrane"/>
    <property type="evidence" value="ECO:0000318"/>
    <property type="project" value="GO_Central"/>
</dbReference>
<dbReference type="GO" id="GO:0006865">
    <property type="term" value="P:amino acid transport"/>
    <property type="evidence" value="ECO:0007669"/>
    <property type="project" value="UniProtKB-KW"/>
</dbReference>
<dbReference type="GO" id="GO:0055085">
    <property type="term" value="P:transmembrane transport"/>
    <property type="evidence" value="ECO:0007669"/>
    <property type="project" value="InterPro"/>
</dbReference>
<dbReference type="CDD" id="cd06261">
    <property type="entry name" value="TM_PBP2"/>
    <property type="match status" value="1"/>
</dbReference>
<dbReference type="FunFam" id="1.10.3720.10:FF:000001">
    <property type="entry name" value="Glycine betaine ABC transporter, permease"/>
    <property type="match status" value="1"/>
</dbReference>
<dbReference type="Gene3D" id="1.10.3720.10">
    <property type="entry name" value="MetI-like"/>
    <property type="match status" value="1"/>
</dbReference>
<dbReference type="InterPro" id="IPR051204">
    <property type="entry name" value="ABC_transp_perm/SBD"/>
</dbReference>
<dbReference type="InterPro" id="IPR000515">
    <property type="entry name" value="MetI-like"/>
</dbReference>
<dbReference type="InterPro" id="IPR035906">
    <property type="entry name" value="MetI-like_sf"/>
</dbReference>
<dbReference type="PANTHER" id="PTHR30177">
    <property type="entry name" value="GLYCINE BETAINE/L-PROLINE TRANSPORT SYSTEM PERMEASE PROTEIN PROW"/>
    <property type="match status" value="1"/>
</dbReference>
<dbReference type="PANTHER" id="PTHR30177:SF4">
    <property type="entry name" value="OSMOPROTECTANT IMPORT PERMEASE PROTEIN OSMW"/>
    <property type="match status" value="1"/>
</dbReference>
<dbReference type="Pfam" id="PF00528">
    <property type="entry name" value="BPD_transp_1"/>
    <property type="match status" value="1"/>
</dbReference>
<dbReference type="SUPFAM" id="SSF161098">
    <property type="entry name" value="MetI-like"/>
    <property type="match status" value="1"/>
</dbReference>
<dbReference type="PROSITE" id="PS50928">
    <property type="entry name" value="ABC_TM1"/>
    <property type="match status" value="1"/>
</dbReference>
<proteinExistence type="evidence at protein level"/>
<accession>O34742</accession>
<name>OPUCD_BACSU</name>
<gene>
    <name type="primary">opuCD</name>
    <name type="synonym">yvbB</name>
    <name type="ordered locus">BSU33800</name>
</gene>
<sequence length="229" mass="24551">MEVLQQLGTYYSQNGGYVLQEFYRHFLMSVYGVLFAAIVGIPLGILIARYRRLSGWVFAVTNVIQTIPALAMLAVLMLVMGLGANTVILSLFLYSLLPIIRNTYTGIISIEHAYLESGKAMGMTKFQVLRMVELPLALSVIMAGLRTALVIAIGITAIGTFVGAGGLGDIIVRGSNATNGTAIILAGAIPTALMAVIADLVMGWLERALSPIKKKKGNFIIADRKTTSI</sequence>
<organism>
    <name type="scientific">Bacillus subtilis (strain 168)</name>
    <dbReference type="NCBI Taxonomy" id="224308"/>
    <lineage>
        <taxon>Bacteria</taxon>
        <taxon>Bacillati</taxon>
        <taxon>Bacillota</taxon>
        <taxon>Bacilli</taxon>
        <taxon>Bacillales</taxon>
        <taxon>Bacillaceae</taxon>
        <taxon>Bacillus</taxon>
    </lineage>
</organism>
<protein>
    <recommendedName>
        <fullName>Glycine betaine/carnitine/choline transport system permease protein OpuCD</fullName>
    </recommendedName>
</protein>
<keyword id="KW-0029">Amino-acid transport</keyword>
<keyword id="KW-1003">Cell membrane</keyword>
<keyword id="KW-0472">Membrane</keyword>
<keyword id="KW-1185">Reference proteome</keyword>
<keyword id="KW-0812">Transmembrane</keyword>
<keyword id="KW-1133">Transmembrane helix</keyword>
<keyword id="KW-0813">Transport</keyword>